<evidence type="ECO:0000255" key="1">
    <source>
        <dbReference type="HAMAP-Rule" id="MF_00473"/>
    </source>
</evidence>
<protein>
    <recommendedName>
        <fullName evidence="1">Glucose-6-phosphate isomerase</fullName>
        <shortName evidence="1">GPI</shortName>
        <ecNumber evidence="1">5.3.1.9</ecNumber>
    </recommendedName>
    <alternativeName>
        <fullName evidence="1">Phosphoglucose isomerase</fullName>
        <shortName evidence="1">PGI</shortName>
    </alternativeName>
    <alternativeName>
        <fullName evidence="1">Phosphohexose isomerase</fullName>
        <shortName evidence="1">PHI</shortName>
    </alternativeName>
</protein>
<comment type="function">
    <text evidence="1">Catalyzes the reversible isomerization of glucose-6-phosphate to fructose-6-phosphate.</text>
</comment>
<comment type="catalytic activity">
    <reaction evidence="1">
        <text>alpha-D-glucose 6-phosphate = beta-D-fructose 6-phosphate</text>
        <dbReference type="Rhea" id="RHEA:11816"/>
        <dbReference type="ChEBI" id="CHEBI:57634"/>
        <dbReference type="ChEBI" id="CHEBI:58225"/>
        <dbReference type="EC" id="5.3.1.9"/>
    </reaction>
</comment>
<comment type="pathway">
    <text evidence="1">Carbohydrate biosynthesis; gluconeogenesis.</text>
</comment>
<comment type="pathway">
    <text evidence="1">Carbohydrate degradation; glycolysis; D-glyceraldehyde 3-phosphate and glycerone phosphate from D-glucose: step 2/4.</text>
</comment>
<comment type="subcellular location">
    <subcellularLocation>
        <location evidence="1">Cytoplasm</location>
    </subcellularLocation>
</comment>
<comment type="similarity">
    <text evidence="1">Belongs to the GPI family.</text>
</comment>
<feature type="chain" id="PRO_1000060395" description="Glucose-6-phosphate isomerase">
    <location>
        <begin position="1"/>
        <end position="549"/>
    </location>
</feature>
<feature type="active site" description="Proton donor" evidence="1">
    <location>
        <position position="355"/>
    </location>
</feature>
<feature type="active site" evidence="1">
    <location>
        <position position="386"/>
    </location>
</feature>
<feature type="active site" evidence="1">
    <location>
        <position position="514"/>
    </location>
</feature>
<reference key="1">
    <citation type="journal article" date="2010" name="PLoS Genet.">
        <title>Genome sequence of the plant growth promoting endophytic bacterium Enterobacter sp. 638.</title>
        <authorList>
            <person name="Taghavi S."/>
            <person name="van der Lelie D."/>
            <person name="Hoffman A."/>
            <person name="Zhang Y.B."/>
            <person name="Walla M.D."/>
            <person name="Vangronsveld J."/>
            <person name="Newman L."/>
            <person name="Monchy S."/>
        </authorList>
    </citation>
    <scope>NUCLEOTIDE SEQUENCE [LARGE SCALE GENOMIC DNA]</scope>
    <source>
        <strain>638</strain>
    </source>
</reference>
<dbReference type="EC" id="5.3.1.9" evidence="1"/>
<dbReference type="EMBL" id="CP000653">
    <property type="protein sequence ID" value="ABP58920.1"/>
    <property type="molecule type" value="Genomic_DNA"/>
</dbReference>
<dbReference type="RefSeq" id="WP_011915493.1">
    <property type="nucleotide sequence ID" value="NC_009436.1"/>
</dbReference>
<dbReference type="SMR" id="A4W5E0"/>
<dbReference type="STRING" id="399742.Ent638_0230"/>
<dbReference type="KEGG" id="ent:Ent638_0230"/>
<dbReference type="eggNOG" id="COG0166">
    <property type="taxonomic scope" value="Bacteria"/>
</dbReference>
<dbReference type="HOGENOM" id="CLU_017947_3_1_6"/>
<dbReference type="OrthoDB" id="140919at2"/>
<dbReference type="UniPathway" id="UPA00109">
    <property type="reaction ID" value="UER00181"/>
</dbReference>
<dbReference type="UniPathway" id="UPA00138"/>
<dbReference type="Proteomes" id="UP000000230">
    <property type="component" value="Chromosome"/>
</dbReference>
<dbReference type="GO" id="GO:0005829">
    <property type="term" value="C:cytosol"/>
    <property type="evidence" value="ECO:0007669"/>
    <property type="project" value="TreeGrafter"/>
</dbReference>
<dbReference type="GO" id="GO:0097367">
    <property type="term" value="F:carbohydrate derivative binding"/>
    <property type="evidence" value="ECO:0007669"/>
    <property type="project" value="InterPro"/>
</dbReference>
<dbReference type="GO" id="GO:0004347">
    <property type="term" value="F:glucose-6-phosphate isomerase activity"/>
    <property type="evidence" value="ECO:0007669"/>
    <property type="project" value="UniProtKB-UniRule"/>
</dbReference>
<dbReference type="GO" id="GO:0048029">
    <property type="term" value="F:monosaccharide binding"/>
    <property type="evidence" value="ECO:0007669"/>
    <property type="project" value="TreeGrafter"/>
</dbReference>
<dbReference type="GO" id="GO:0006094">
    <property type="term" value="P:gluconeogenesis"/>
    <property type="evidence" value="ECO:0007669"/>
    <property type="project" value="UniProtKB-UniRule"/>
</dbReference>
<dbReference type="GO" id="GO:0051156">
    <property type="term" value="P:glucose 6-phosphate metabolic process"/>
    <property type="evidence" value="ECO:0007669"/>
    <property type="project" value="TreeGrafter"/>
</dbReference>
<dbReference type="GO" id="GO:0006096">
    <property type="term" value="P:glycolytic process"/>
    <property type="evidence" value="ECO:0007669"/>
    <property type="project" value="UniProtKB-UniRule"/>
</dbReference>
<dbReference type="CDD" id="cd05015">
    <property type="entry name" value="SIS_PGI_1"/>
    <property type="match status" value="1"/>
</dbReference>
<dbReference type="CDD" id="cd05016">
    <property type="entry name" value="SIS_PGI_2"/>
    <property type="match status" value="1"/>
</dbReference>
<dbReference type="FunFam" id="1.10.1390.10:FF:000001">
    <property type="entry name" value="Glucose-6-phosphate isomerase"/>
    <property type="match status" value="1"/>
</dbReference>
<dbReference type="FunFam" id="3.40.50.10490:FF:000004">
    <property type="entry name" value="Glucose-6-phosphate isomerase"/>
    <property type="match status" value="1"/>
</dbReference>
<dbReference type="Gene3D" id="1.10.1390.10">
    <property type="match status" value="1"/>
</dbReference>
<dbReference type="Gene3D" id="3.40.50.10490">
    <property type="entry name" value="Glucose-6-phosphate isomerase like protein, domain 1"/>
    <property type="match status" value="2"/>
</dbReference>
<dbReference type="HAMAP" id="MF_00473">
    <property type="entry name" value="G6P_isomerase"/>
    <property type="match status" value="1"/>
</dbReference>
<dbReference type="InterPro" id="IPR001672">
    <property type="entry name" value="G6P_Isomerase"/>
</dbReference>
<dbReference type="InterPro" id="IPR023096">
    <property type="entry name" value="G6P_Isomerase_C"/>
</dbReference>
<dbReference type="InterPro" id="IPR018189">
    <property type="entry name" value="Phosphoglucose_isomerase_CS"/>
</dbReference>
<dbReference type="InterPro" id="IPR046348">
    <property type="entry name" value="SIS_dom_sf"/>
</dbReference>
<dbReference type="InterPro" id="IPR035476">
    <property type="entry name" value="SIS_PGI_1"/>
</dbReference>
<dbReference type="InterPro" id="IPR035482">
    <property type="entry name" value="SIS_PGI_2"/>
</dbReference>
<dbReference type="NCBIfam" id="NF001211">
    <property type="entry name" value="PRK00179.1"/>
    <property type="match status" value="1"/>
</dbReference>
<dbReference type="PANTHER" id="PTHR11469">
    <property type="entry name" value="GLUCOSE-6-PHOSPHATE ISOMERASE"/>
    <property type="match status" value="1"/>
</dbReference>
<dbReference type="PANTHER" id="PTHR11469:SF1">
    <property type="entry name" value="GLUCOSE-6-PHOSPHATE ISOMERASE"/>
    <property type="match status" value="1"/>
</dbReference>
<dbReference type="Pfam" id="PF00342">
    <property type="entry name" value="PGI"/>
    <property type="match status" value="1"/>
</dbReference>
<dbReference type="PRINTS" id="PR00662">
    <property type="entry name" value="G6PISOMERASE"/>
</dbReference>
<dbReference type="SUPFAM" id="SSF53697">
    <property type="entry name" value="SIS domain"/>
    <property type="match status" value="1"/>
</dbReference>
<dbReference type="PROSITE" id="PS00765">
    <property type="entry name" value="P_GLUCOSE_ISOMERASE_1"/>
    <property type="match status" value="1"/>
</dbReference>
<dbReference type="PROSITE" id="PS00174">
    <property type="entry name" value="P_GLUCOSE_ISOMERASE_2"/>
    <property type="match status" value="1"/>
</dbReference>
<dbReference type="PROSITE" id="PS51463">
    <property type="entry name" value="P_GLUCOSE_ISOMERASE_3"/>
    <property type="match status" value="1"/>
</dbReference>
<gene>
    <name evidence="1" type="primary">pgi</name>
    <name type="ordered locus">Ent638_0230</name>
</gene>
<proteinExistence type="inferred from homology"/>
<sequence length="549" mass="61287">MKNINPTQTSAWQALQKHFDEMKDVSLADLFAKDGDRFSKFSATFDDQMLVDFSKNRITEETLAKLQDLAKETDLAGAIKSMFSGEKINRTEDRAVLHVALRNRSNTPIMVDGKDVMPEVNAVLEKMKTFSEEIISGSWKGYTGKAITDVVNIGIGGSDLGPFMVTEALRPYKNHLNMHFVSNVDGTHIAEVLKKVNPETTLFLVASKTFTTQETMTNAHSARDWFLATAGDNKHVAKHFAALSTNGKAVGEFGIDTANMFEFWDWVGGRYSLWSAIGLSIILSVGYDNFVELLSGAHAMDKHFANTAPEKNLPVLLALIGIWYNNFFGAETEAILPYDQYMHRFAAYFQQGNMESNGKYVDRNGNAVDYQTGPIIWGEPGTNGQHAFYQLIHQGTKMVPCDFIAPATTHNALSDHHQKLLSNFFAQTEALAFGKARDVVEQEYRDLGKDPATLENVVPFKVFEGNRPTNSILLREITPFSLGALIALYEHKIFTQGAILNIFTFDQWGVELGKQLANRILPELGDDKDINSHDSSTNGLINRYKSWRA</sequence>
<name>G6PI_ENT38</name>
<keyword id="KW-0963">Cytoplasm</keyword>
<keyword id="KW-0312">Gluconeogenesis</keyword>
<keyword id="KW-0324">Glycolysis</keyword>
<keyword id="KW-0413">Isomerase</keyword>
<accession>A4W5E0</accession>
<organism>
    <name type="scientific">Enterobacter sp. (strain 638)</name>
    <dbReference type="NCBI Taxonomy" id="399742"/>
    <lineage>
        <taxon>Bacteria</taxon>
        <taxon>Pseudomonadati</taxon>
        <taxon>Pseudomonadota</taxon>
        <taxon>Gammaproteobacteria</taxon>
        <taxon>Enterobacterales</taxon>
        <taxon>Enterobacteriaceae</taxon>
        <taxon>Enterobacter</taxon>
    </lineage>
</organism>